<organism>
    <name type="scientific">Enterobacteria phage T4</name>
    <name type="common">Bacteriophage T4</name>
    <dbReference type="NCBI Taxonomy" id="10665"/>
    <lineage>
        <taxon>Viruses</taxon>
        <taxon>Duplodnaviria</taxon>
        <taxon>Heunggongvirae</taxon>
        <taxon>Uroviricota</taxon>
        <taxon>Caudoviricetes</taxon>
        <taxon>Straboviridae</taxon>
        <taxon>Tevenvirinae</taxon>
        <taxon>Tequatrovirus</taxon>
    </lineage>
</organism>
<name>DCHM_BPT4</name>
<organismHost>
    <name type="scientific">Escherichia coli</name>
    <dbReference type="NCBI Taxonomy" id="562"/>
</organismHost>
<reference key="1">
    <citation type="journal article" date="1987" name="Nucleic Acids Res.">
        <title>Nucleotide sequence of the deoxycytidylate hydroxymethylase gene of bacteriophage T4 (g42) and the homology of its gene product with thymidylate synthase of E. coli.</title>
        <authorList>
            <person name="Lamm N."/>
            <person name="Tomaschewski J."/>
            <person name="Rueger W."/>
        </authorList>
    </citation>
    <scope>NUCLEOTIDE SEQUENCE [GENOMIC DNA]</scope>
    <source>
        <strain>W</strain>
    </source>
</reference>
<reference key="2">
    <citation type="journal article" date="1988" name="Eur. J. Biochem.">
        <title>Deoxycytidylate hydroxymethylase gene of bacteriophage T4. Nucleotide sequence determination and over-expression of the gene.</title>
        <authorList>
            <person name="Lamm N."/>
            <person name="Wang Y."/>
            <person name="Mathews C.K."/>
            <person name="Rueger W."/>
        </authorList>
    </citation>
    <scope>NUCLEOTIDE SEQUENCE [GENOMIC DNA]</scope>
</reference>
<reference key="3">
    <citation type="journal article" date="2003" name="Microbiol. Mol. Biol. Rev.">
        <title>Bacteriophage T4 genome.</title>
        <authorList>
            <person name="Miller E.S."/>
            <person name="Kutter E."/>
            <person name="Mosig G."/>
            <person name="Arisaka F."/>
            <person name="Kunisawa T."/>
            <person name="Ruger W."/>
        </authorList>
    </citation>
    <scope>NUCLEOTIDE SEQUENCE [LARGE SCALE GENOMIC DNA]</scope>
</reference>
<reference key="4">
    <citation type="journal article" date="1988" name="J. Bacteriol.">
        <title>Expression and DNA sequence of the cloned bacteriophage T4 dCMP hydroxymethylase gene.</title>
        <authorList>
            <person name="Thylen C."/>
        </authorList>
    </citation>
    <scope>NUCLEOTIDE SEQUENCE [GENOMIC DNA] OF 1-186 AND 225-246</scope>
</reference>
<reference key="5">
    <citation type="journal article" date="1985" name="Nucleic Acids Res.">
        <title>T4-induced alpha- and beta-glucosyltransferase: cloning of the genes and a comparison of their products based on sequencing data.</title>
        <authorList>
            <person name="Tomaschewski J."/>
            <person name="Gram H."/>
            <person name="Crabb J.W."/>
            <person name="Rueger W."/>
        </authorList>
    </citation>
    <scope>NUCLEOTIDE SEQUENCE [GENOMIC DNA] OF 226-246</scope>
</reference>
<dbReference type="EC" id="2.1.2.8"/>
<dbReference type="EMBL" id="Y00148">
    <property type="protein sequence ID" value="CAA68342.1"/>
    <property type="molecule type" value="Genomic_DNA"/>
</dbReference>
<dbReference type="EMBL" id="AF158101">
    <property type="protein sequence ID" value="AAD42467.1"/>
    <property type="molecule type" value="Genomic_DNA"/>
</dbReference>
<dbReference type="EMBL" id="AH003347">
    <property type="protein sequence ID" value="AAA88468.1"/>
    <property type="molecule type" value="Genomic_DNA"/>
</dbReference>
<dbReference type="EMBL" id="AH003347">
    <property type="protein sequence ID" value="AAA88467.1"/>
    <property type="molecule type" value="Genomic_DNA"/>
</dbReference>
<dbReference type="EMBL" id="M37159">
    <property type="protein sequence ID" value="AAA21709.1"/>
    <property type="molecule type" value="Genomic_DNA"/>
</dbReference>
<dbReference type="EMBL" id="X03139">
    <property type="protein sequence ID" value="CAA26907.1"/>
    <property type="molecule type" value="Genomic_DNA"/>
</dbReference>
<dbReference type="PIR" id="JS0786">
    <property type="entry name" value="SZBPT4"/>
</dbReference>
<dbReference type="RefSeq" id="NP_049659.1">
    <property type="nucleotide sequence ID" value="NC_000866.4"/>
</dbReference>
<dbReference type="PDB" id="1B49">
    <property type="method" value="X-ray"/>
    <property type="resolution" value="2.30 A"/>
    <property type="chains" value="A/C=1-246"/>
</dbReference>
<dbReference type="PDB" id="1B5D">
    <property type="method" value="X-ray"/>
    <property type="resolution" value="2.20 A"/>
    <property type="chains" value="A/B=1-246"/>
</dbReference>
<dbReference type="PDB" id="1B5E">
    <property type="method" value="X-ray"/>
    <property type="resolution" value="1.60 A"/>
    <property type="chains" value="A/B=1-246"/>
</dbReference>
<dbReference type="PDB" id="6A9A">
    <property type="method" value="X-ray"/>
    <property type="resolution" value="1.90 A"/>
    <property type="chains" value="A=1-246"/>
</dbReference>
<dbReference type="PDB" id="6A9B">
    <property type="method" value="X-ray"/>
    <property type="resolution" value="2.01 A"/>
    <property type="chains" value="A=1-246"/>
</dbReference>
<dbReference type="PDB" id="6L18">
    <property type="method" value="X-ray"/>
    <property type="resolution" value="1.90 A"/>
    <property type="chains" value="A=1-246"/>
</dbReference>
<dbReference type="PDBsum" id="1B49"/>
<dbReference type="PDBsum" id="1B5D"/>
<dbReference type="PDBsum" id="1B5E"/>
<dbReference type="PDBsum" id="6A9A"/>
<dbReference type="PDBsum" id="6A9B"/>
<dbReference type="PDBsum" id="6L18"/>
<dbReference type="SMR" id="P08773"/>
<dbReference type="DrugBank" id="DB03798">
    <property type="generic name" value="2'-Deoxycytidine-5'-Monophosphate"/>
</dbReference>
<dbReference type="GeneID" id="1258746"/>
<dbReference type="KEGG" id="vg:1258746"/>
<dbReference type="OrthoDB" id="8554at10239"/>
<dbReference type="BRENDA" id="2.1.2.8">
    <property type="organism ID" value="732"/>
</dbReference>
<dbReference type="EvolutionaryTrace" id="P08773"/>
<dbReference type="Proteomes" id="UP000009087">
    <property type="component" value="Segment"/>
</dbReference>
<dbReference type="GO" id="GO:0047153">
    <property type="term" value="F:deoxycytidylate 5-hydroxymethyltransferase activity"/>
    <property type="evidence" value="ECO:0007669"/>
    <property type="project" value="UniProtKB-EC"/>
</dbReference>
<dbReference type="Gene3D" id="3.30.572.10">
    <property type="entry name" value="Thymidylate synthase/dCMP hydroxymethylase domain"/>
    <property type="match status" value="1"/>
</dbReference>
<dbReference type="InterPro" id="IPR014619">
    <property type="entry name" value="Deoxycytidylate_hydroxyMease"/>
</dbReference>
<dbReference type="InterPro" id="IPR023451">
    <property type="entry name" value="Thymidate_synth/dCMP_Mease_dom"/>
</dbReference>
<dbReference type="InterPro" id="IPR036926">
    <property type="entry name" value="Thymidate_synth/dCMP_Mease_sf"/>
</dbReference>
<dbReference type="Pfam" id="PF00303">
    <property type="entry name" value="Thymidylat_synt"/>
    <property type="match status" value="1"/>
</dbReference>
<dbReference type="PIRSF" id="PIRSF036750">
    <property type="entry name" value="dCMP_HMase"/>
    <property type="match status" value="1"/>
</dbReference>
<dbReference type="SUPFAM" id="SSF55831">
    <property type="entry name" value="Thymidylate synthase/dCMP hydroxymethylase"/>
    <property type="match status" value="1"/>
</dbReference>
<evidence type="ECO:0000255" key="1"/>
<evidence type="ECO:0000305" key="2"/>
<evidence type="ECO:0007829" key="3">
    <source>
        <dbReference type="PDB" id="1B49"/>
    </source>
</evidence>
<evidence type="ECO:0007829" key="4">
    <source>
        <dbReference type="PDB" id="1B5E"/>
    </source>
</evidence>
<evidence type="ECO:0007829" key="5">
    <source>
        <dbReference type="PDB" id="6A9A"/>
    </source>
</evidence>
<keyword id="KW-0002">3D-structure</keyword>
<keyword id="KW-1185">Reference proteome</keyword>
<keyword id="KW-0808">Transferase</keyword>
<gene>
    <name type="primary">42</name>
</gene>
<protein>
    <recommendedName>
        <fullName>Deoxycytidylate 5-hydroxymethyltransferase</fullName>
        <shortName>Deoxycytidylate hydroxymethylase</shortName>
        <ecNumber>2.1.2.8</ecNumber>
    </recommendedName>
    <alternativeName>
        <fullName>dCMP hydroxymethylase</fullName>
        <shortName>dCMP HMase</shortName>
    </alternativeName>
</protein>
<sequence length="246" mass="28489">MISDSMTVEEIRLHLGLALKEKDFVVDKTGVKTIEIIGASFVADEPFIFGALNDEYIQRELEWYKSKSLFVKDIPGETPKIWQQVASSKGEINSNYGWAIWSEDNYAQYDMCLAELGQNPDSRRGIMIYTRPSMQFDYNKDGMSDFMCTNTVQYLIRDKKINAVVNMRSNDVVFGFRNDYAWQKYVLDKLVSDLNAGDSTRQYKAGSIIWNVGSLHVYSRHFYLVDHWWKTGETHISKKDYVGKYA</sequence>
<comment type="catalytic activity">
    <reaction>
        <text>dCMP + (6R)-5,10-methylene-5,6,7,8-tetrahydrofolate + H2O = 5-hydroxymethyl-dCMP + (6S)-5,6,7,8-tetrahydrofolate</text>
        <dbReference type="Rhea" id="RHEA:11280"/>
        <dbReference type="ChEBI" id="CHEBI:15377"/>
        <dbReference type="ChEBI" id="CHEBI:15636"/>
        <dbReference type="ChEBI" id="CHEBI:57453"/>
        <dbReference type="ChEBI" id="CHEBI:57566"/>
        <dbReference type="ChEBI" id="CHEBI:57962"/>
        <dbReference type="EC" id="2.1.2.8"/>
    </reaction>
</comment>
<comment type="similarity">
    <text evidence="2">Belongs to the thymidylate synthase family.</text>
</comment>
<accession>P08773</accession>
<proteinExistence type="evidence at protein level"/>
<feature type="chain" id="PRO_0000141068" description="Deoxycytidylate 5-hydroxymethyltransferase">
    <location>
        <begin position="1"/>
        <end position="246"/>
    </location>
</feature>
<feature type="active site" evidence="1">
    <location>
        <position position="148"/>
    </location>
</feature>
<feature type="sequence conflict" description="In Ref. 4; AAA88467." evidence="2" ref="4">
    <original>V</original>
    <variation>L</variation>
    <location>
        <position position="164"/>
    </location>
</feature>
<feature type="helix" evidence="5">
    <location>
        <begin position="2"/>
        <end position="4"/>
    </location>
</feature>
<feature type="helix" evidence="4">
    <location>
        <begin position="8"/>
        <end position="20"/>
    </location>
</feature>
<feature type="strand" evidence="3">
    <location>
        <begin position="28"/>
        <end position="30"/>
    </location>
</feature>
<feature type="strand" evidence="4">
    <location>
        <begin position="32"/>
        <end position="42"/>
    </location>
</feature>
<feature type="strand" evidence="4">
    <location>
        <begin position="48"/>
        <end position="50"/>
    </location>
</feature>
<feature type="helix" evidence="4">
    <location>
        <begin position="54"/>
        <end position="66"/>
    </location>
</feature>
<feature type="helix" evidence="4">
    <location>
        <begin position="71"/>
        <end position="73"/>
    </location>
</feature>
<feature type="strand" evidence="4">
    <location>
        <begin position="74"/>
        <end position="77"/>
    </location>
</feature>
<feature type="helix" evidence="4">
    <location>
        <begin position="80"/>
        <end position="85"/>
    </location>
</feature>
<feature type="helix" evidence="4">
    <location>
        <begin position="96"/>
        <end position="101"/>
    </location>
</feature>
<feature type="helix" evidence="4">
    <location>
        <begin position="103"/>
        <end position="105"/>
    </location>
</feature>
<feature type="helix" evidence="4">
    <location>
        <begin position="108"/>
        <end position="118"/>
    </location>
</feature>
<feature type="strand" evidence="4">
    <location>
        <begin position="126"/>
        <end position="128"/>
    </location>
</feature>
<feature type="helix" evidence="4">
    <location>
        <begin position="134"/>
        <end position="137"/>
    </location>
</feature>
<feature type="helix" evidence="4">
    <location>
        <begin position="138"/>
        <end position="142"/>
    </location>
</feature>
<feature type="strand" evidence="4">
    <location>
        <begin position="149"/>
        <end position="157"/>
    </location>
</feature>
<feature type="strand" evidence="4">
    <location>
        <begin position="160"/>
        <end position="171"/>
    </location>
</feature>
<feature type="helix" evidence="4">
    <location>
        <begin position="174"/>
        <end position="197"/>
    </location>
</feature>
<feature type="strand" evidence="4">
    <location>
        <begin position="204"/>
        <end position="218"/>
    </location>
</feature>
<feature type="helix" evidence="4">
    <location>
        <begin position="219"/>
        <end position="221"/>
    </location>
</feature>
<feature type="helix" evidence="4">
    <location>
        <begin position="222"/>
        <end position="231"/>
    </location>
</feature>
<feature type="turn" evidence="4">
    <location>
        <begin position="238"/>
        <end position="240"/>
    </location>
</feature>